<proteinExistence type="evidence at protein level"/>
<gene>
    <name type="primary">RPP2B</name>
</gene>
<protein>
    <recommendedName>
        <fullName evidence="4">Large ribosomal subunit protein P2B</fullName>
    </recommendedName>
    <alternativeName>
        <fullName>60S acidic ribosomal protein P2-B</fullName>
        <shortName>CaRP2B</shortName>
    </alternativeName>
</protein>
<feature type="chain" id="PRO_0000157675" description="Large ribosomal subunit protein P2B">
    <location>
        <begin position="1"/>
        <end position="111"/>
    </location>
</feature>
<feature type="region of interest" description="Disordered" evidence="3">
    <location>
        <begin position="62"/>
        <end position="111"/>
    </location>
</feature>
<feature type="compositionally biased region" description="Low complexity" evidence="3">
    <location>
        <begin position="67"/>
        <end position="87"/>
    </location>
</feature>
<feature type="compositionally biased region" description="Acidic residues" evidence="3">
    <location>
        <begin position="88"/>
        <end position="105"/>
    </location>
</feature>
<feature type="modified residue" description="Phosphoserine" evidence="1">
    <location>
        <position position="101"/>
    </location>
</feature>
<comment type="function">
    <text evidence="2">Plays an important role in the elongation step of protein synthesis.</text>
</comment>
<comment type="similarity">
    <text evidence="4">Belongs to the eukaryotic ribosomal protein P1/P2 family.</text>
</comment>
<organism evidence="5">
    <name type="scientific">Candida albicans</name>
    <name type="common">Yeast</name>
    <dbReference type="NCBI Taxonomy" id="5476"/>
    <lineage>
        <taxon>Eukaryota</taxon>
        <taxon>Fungi</taxon>
        <taxon>Dikarya</taxon>
        <taxon>Ascomycota</taxon>
        <taxon>Saccharomycotina</taxon>
        <taxon>Pichiomycetes</taxon>
        <taxon>Debaryomycetaceae</taxon>
        <taxon>Candida/Lodderomyces clade</taxon>
        <taxon>Candida</taxon>
    </lineage>
</organism>
<dbReference type="EMBL" id="AF317662">
    <property type="protein sequence ID" value="AAG33243.1"/>
    <property type="molecule type" value="Genomic_DNA"/>
</dbReference>
<dbReference type="SMR" id="Q9HFQ4"/>
<dbReference type="VEuPathDB" id="FungiDB:C3_04680W_A"/>
<dbReference type="VEuPathDB" id="FungiDB:CAWG_02781"/>
<dbReference type="GO" id="GO:0022625">
    <property type="term" value="C:cytosolic large ribosomal subunit"/>
    <property type="evidence" value="ECO:0007669"/>
    <property type="project" value="EnsemblFungi"/>
</dbReference>
<dbReference type="GO" id="GO:0042802">
    <property type="term" value="F:identical protein binding"/>
    <property type="evidence" value="ECO:0000314"/>
    <property type="project" value="CAFA"/>
</dbReference>
<dbReference type="GO" id="GO:0030295">
    <property type="term" value="F:protein kinase activator activity"/>
    <property type="evidence" value="ECO:0007669"/>
    <property type="project" value="EnsemblFungi"/>
</dbReference>
<dbReference type="GO" id="GO:0003735">
    <property type="term" value="F:structural constituent of ribosome"/>
    <property type="evidence" value="ECO:0007669"/>
    <property type="project" value="EnsemblFungi"/>
</dbReference>
<dbReference type="GO" id="GO:0002182">
    <property type="term" value="P:cytoplasmic translational elongation"/>
    <property type="evidence" value="ECO:0007669"/>
    <property type="project" value="InterPro"/>
</dbReference>
<dbReference type="GO" id="GO:0051291">
    <property type="term" value="P:protein heterooligomerization"/>
    <property type="evidence" value="ECO:0000314"/>
    <property type="project" value="CAFA"/>
</dbReference>
<dbReference type="GO" id="GO:0051260">
    <property type="term" value="P:protein homooligomerization"/>
    <property type="evidence" value="ECO:0000314"/>
    <property type="project" value="CAFA"/>
</dbReference>
<dbReference type="CDD" id="cd05833">
    <property type="entry name" value="Ribosomal_P2"/>
    <property type="match status" value="1"/>
</dbReference>
<dbReference type="FunFam" id="1.10.10.1410:FF:000002">
    <property type="entry name" value="60S acidic ribosomal protein P2"/>
    <property type="match status" value="1"/>
</dbReference>
<dbReference type="Gene3D" id="1.10.10.1410">
    <property type="match status" value="1"/>
</dbReference>
<dbReference type="HAMAP" id="MF_01478">
    <property type="entry name" value="Ribosomal_L12_arch"/>
    <property type="match status" value="1"/>
</dbReference>
<dbReference type="InterPro" id="IPR038716">
    <property type="entry name" value="P1/P2_N_sf"/>
</dbReference>
<dbReference type="InterPro" id="IPR027534">
    <property type="entry name" value="Ribosomal_P1/P2"/>
</dbReference>
<dbReference type="InterPro" id="IPR001859">
    <property type="entry name" value="Ribosomal_P1/P2_euk"/>
</dbReference>
<dbReference type="InterPro" id="IPR044076">
    <property type="entry name" value="Ribosomal_P2"/>
</dbReference>
<dbReference type="PANTHER" id="PTHR21141">
    <property type="entry name" value="60S ACIDIC RIBOSOMAL PROTEIN FAMILY MEMBER"/>
    <property type="match status" value="1"/>
</dbReference>
<dbReference type="PANTHER" id="PTHR21141:SF5">
    <property type="entry name" value="LARGE RIBOSOMAL SUBUNIT PROTEIN P2"/>
    <property type="match status" value="1"/>
</dbReference>
<dbReference type="Pfam" id="PF00428">
    <property type="entry name" value="Ribosomal_60s"/>
    <property type="match status" value="1"/>
</dbReference>
<dbReference type="PRINTS" id="PR00456">
    <property type="entry name" value="RIBOSOMALP2"/>
</dbReference>
<sequence>MKYLAAYLLLVQGGNTSPSASDITALLESVGVEAEESRLQALLKDLEGKDLQELIAEGNTKLASVPSGGAAAGGASASTGAAAGGAAEAEEEKEEEAKEESDDDMGFGLFD</sequence>
<name>RLA4_CANAX</name>
<keyword id="KW-0903">Direct protein sequencing</keyword>
<keyword id="KW-0597">Phosphoprotein</keyword>
<keyword id="KW-0687">Ribonucleoprotein</keyword>
<keyword id="KW-0689">Ribosomal protein</keyword>
<evidence type="ECO:0000250" key="1"/>
<evidence type="ECO:0000250" key="2">
    <source>
        <dbReference type="UniProtKB" id="Q9UUZ6"/>
    </source>
</evidence>
<evidence type="ECO:0000256" key="3">
    <source>
        <dbReference type="SAM" id="MobiDB-lite"/>
    </source>
</evidence>
<evidence type="ECO:0000305" key="4"/>
<evidence type="ECO:0000312" key="5">
    <source>
        <dbReference type="EMBL" id="AAG33243.1"/>
    </source>
</evidence>
<accession>Q9HFQ4</accession>
<reference evidence="4" key="1">
    <citation type="submission" date="2000-11" db="EMBL/GenBank/DDBJ databases">
        <title>Cloning, expression and purification of the acidic ribosomal protein from Candida albicans.</title>
        <authorList>
            <person name="Abramczyk D."/>
            <person name="Tchorzewski M."/>
            <person name="Grankowski N."/>
        </authorList>
    </citation>
    <scope>NUCLEOTIDE SEQUENCE [GENOMIC DNA]</scope>
    <source>
        <strain>ATCC 10231 / CBS 6431 / CIP 48.72 / DSM 1386 / NBRC 1594</strain>
    </source>
</reference>
<reference key="2">
    <citation type="journal article" date="2004" name="Biochim. Biophys. Acta">
        <title>Overexpression, purification and characterization of the acidic ribosomal P-proteins from Candida albicans.</title>
        <authorList>
            <person name="Abramczyk D."/>
            <person name="Tchorzewski M."/>
            <person name="Krokowski D."/>
            <person name="Boguszewska A."/>
            <person name="Grankowski N."/>
        </authorList>
    </citation>
    <scope>PROTEIN SEQUENCE OF 1-20</scope>
    <source>
        <strain>ATCC 10231 / CBS 6431 / CIP 48.72 / DSM 1386 / NBRC 1594</strain>
    </source>
</reference>